<feature type="chain" id="PRO_0000199514" description="Aspartic proteinase nepenthesin-2">
    <location>
        <begin position="1"/>
        <end position="178"/>
    </location>
</feature>
<feature type="active site" evidence="1">
    <location>
        <position position="98"/>
    </location>
</feature>
<feature type="sequence variant" evidence="2">
    <original>T</original>
    <variation>D</variation>
    <location>
        <position position="42"/>
    </location>
</feature>
<feature type="non-consecutive residues" evidence="3">
    <location>
        <begin position="18"/>
        <end position="19"/>
    </location>
</feature>
<feature type="non-consecutive residues" evidence="3">
    <location>
        <begin position="35"/>
        <end position="36"/>
    </location>
</feature>
<feature type="non-consecutive residues" evidence="3">
    <location>
        <begin position="58"/>
        <end position="59"/>
    </location>
</feature>
<feature type="non-consecutive residues" evidence="3">
    <location>
        <begin position="79"/>
        <end position="80"/>
    </location>
</feature>
<feature type="non-consecutive residues" evidence="3">
    <location>
        <begin position="92"/>
        <end position="93"/>
    </location>
</feature>
<feature type="non-consecutive residues" evidence="3">
    <location>
        <begin position="97"/>
        <end position="98"/>
    </location>
</feature>
<feature type="non-consecutive residues" evidence="3">
    <location>
        <begin position="161"/>
        <end position="162"/>
    </location>
</feature>
<evidence type="ECO:0000255" key="1">
    <source>
        <dbReference type="PROSITE-ProRule" id="PRU10094"/>
    </source>
</evidence>
<evidence type="ECO:0000269" key="2">
    <source>
    </source>
</evidence>
<evidence type="ECO:0000305" key="3"/>
<dbReference type="EC" id="3.4.23.12"/>
<dbReference type="GO" id="GO:0005576">
    <property type="term" value="C:extracellular region"/>
    <property type="evidence" value="ECO:0007669"/>
    <property type="project" value="UniProtKB-SubCell"/>
</dbReference>
<dbReference type="GO" id="GO:0004190">
    <property type="term" value="F:aspartic-type endopeptidase activity"/>
    <property type="evidence" value="ECO:0007669"/>
    <property type="project" value="UniProtKB-KW"/>
</dbReference>
<dbReference type="GO" id="GO:0006508">
    <property type="term" value="P:proteolysis"/>
    <property type="evidence" value="ECO:0007669"/>
    <property type="project" value="UniProtKB-KW"/>
</dbReference>
<dbReference type="Gene3D" id="2.40.70.10">
    <property type="entry name" value="Acid Proteases"/>
    <property type="match status" value="1"/>
</dbReference>
<dbReference type="InterPro" id="IPR021109">
    <property type="entry name" value="Peptidase_aspartic_dom_sf"/>
</dbReference>
<dbReference type="InterPro" id="IPR051708">
    <property type="entry name" value="Plant_Aspart_Prot_A1"/>
</dbReference>
<dbReference type="InterPro" id="IPR032861">
    <property type="entry name" value="TAXi_N"/>
</dbReference>
<dbReference type="PANTHER" id="PTHR47967:SF23">
    <property type="entry name" value="OS04G0448300 PROTEIN"/>
    <property type="match status" value="1"/>
</dbReference>
<dbReference type="PANTHER" id="PTHR47967">
    <property type="entry name" value="OS07G0603500 PROTEIN-RELATED"/>
    <property type="match status" value="1"/>
</dbReference>
<dbReference type="Pfam" id="PF14543">
    <property type="entry name" value="TAXi_N"/>
    <property type="match status" value="1"/>
</dbReference>
<dbReference type="SUPFAM" id="SSF50630">
    <property type="entry name" value="Acid proteases"/>
    <property type="match status" value="2"/>
</dbReference>
<sequence length="178" mass="19106">QTVQVEPPYYAGDGEYLMVDLIWTQCEPCTQCFSQDSSSFSTLPCESQYCQDLPSETCDCQYTYGYGDGSSTQGYMAXEDGSSVPNIAFGCGDNLQIDSGTTLTYLPQDAYNAVAQAFTDQINLPTVDESSSGLSTCFQEPSDGSTVQVPEISMQDGGVLNDLQNLAVSFFPTQCGAS</sequence>
<accession>P69477</accession>
<name>NEP2_NEPDI</name>
<reference key="1">
    <citation type="journal article" date="2004" name="Biochem. J.">
        <title>Enzymic and structural characterization of nepenthesin, a unique member of a novel subfamily of aspartic proteinases.</title>
        <authorList>
            <person name="Athauda S.B.P."/>
            <person name="Matsumoto K."/>
            <person name="Rajapakshe S."/>
            <person name="Kuribayashi M."/>
            <person name="Kojima M."/>
            <person name="Kubomura-Yoshida N."/>
            <person name="Iwamatsu A."/>
            <person name="Shibata C."/>
            <person name="Inoue H."/>
            <person name="Takahashi K."/>
        </authorList>
    </citation>
    <scope>PARTIAL PROTEIN SEQUENCE</scope>
    <scope>CHARACTERIZATION</scope>
    <scope>SUBCELLULAR LOCATION</scope>
    <scope>VARIANT ASP-42</scope>
    <source>
        <tissue>Pitcher</tissue>
    </source>
</reference>
<comment type="function">
    <text>Extracellular proteinase found in the pitcher fluid of carnivorous plants. Digest prey for nitrogen uptake.</text>
</comment>
<comment type="catalytic activity">
    <reaction>
        <text>Similar to pepsin, but also cleaves on either side of Asp and at Lys-|-Arg.</text>
        <dbReference type="EC" id="3.4.23.12"/>
    </reaction>
</comment>
<comment type="activity regulation">
    <text>Inhibited by pepstatin and by diazoacetyl-D,L-norleucine methyl ester (DAN) in the presence of Cu(2+) ions.</text>
</comment>
<comment type="biophysicochemical properties">
    <phDependence>
        <text>Optimum pH is 3.0. Retains 80% and 60% of the original activity after incubation for 30 days at pH 3.0 and pH 4.0 respectively. Unstable at pH higher than 5.0.</text>
    </phDependence>
    <temperatureDependence>
        <text>Optimum temperature is 45 degrees Celsius. Thermostable up to 50 degrees Celsius. Retains 44% of the original activity after incubation for 30 days at 50 degrees Celsius.</text>
    </temperatureDependence>
</comment>
<comment type="subcellular location">
    <subcellularLocation>
        <location evidence="2">Secreted</location>
    </subcellularLocation>
</comment>
<comment type="similarity">
    <text evidence="3">Belongs to the peptidase A1 family.</text>
</comment>
<organism>
    <name type="scientific">Nepenthes distillatoria</name>
    <name type="common">Pitcher plant</name>
    <dbReference type="NCBI Taxonomy" id="122309"/>
    <lineage>
        <taxon>Eukaryota</taxon>
        <taxon>Viridiplantae</taxon>
        <taxon>Streptophyta</taxon>
        <taxon>Embryophyta</taxon>
        <taxon>Tracheophyta</taxon>
        <taxon>Spermatophyta</taxon>
        <taxon>Magnoliopsida</taxon>
        <taxon>eudicotyledons</taxon>
        <taxon>Gunneridae</taxon>
        <taxon>Pentapetalae</taxon>
        <taxon>Caryophyllales</taxon>
        <taxon>Nepenthaceae</taxon>
        <taxon>Nepenthes</taxon>
    </lineage>
</organism>
<proteinExistence type="evidence at protein level"/>
<protein>
    <recommendedName>
        <fullName>Aspartic proteinase nepenthesin-2</fullName>
        <ecNumber>3.4.23.12</ecNumber>
    </recommendedName>
    <alternativeName>
        <fullName>Nepenthesin-II</fullName>
    </alternativeName>
</protein>
<keyword id="KW-0064">Aspartyl protease</keyword>
<keyword id="KW-0903">Direct protein sequencing</keyword>
<keyword id="KW-0378">Hydrolase</keyword>
<keyword id="KW-0645">Protease</keyword>
<keyword id="KW-0964">Secreted</keyword>
<keyword id="KW-0865">Zymogen</keyword>